<name>HSCA_HAEIE</name>
<protein>
    <recommendedName>
        <fullName evidence="1">Chaperone protein HscA homolog</fullName>
    </recommendedName>
</protein>
<keyword id="KW-0067">ATP-binding</keyword>
<keyword id="KW-0143">Chaperone</keyword>
<keyword id="KW-0547">Nucleotide-binding</keyword>
<organism>
    <name type="scientific">Haemophilus influenzae (strain PittEE)</name>
    <dbReference type="NCBI Taxonomy" id="374930"/>
    <lineage>
        <taxon>Bacteria</taxon>
        <taxon>Pseudomonadati</taxon>
        <taxon>Pseudomonadota</taxon>
        <taxon>Gammaproteobacteria</taxon>
        <taxon>Pasteurellales</taxon>
        <taxon>Pasteurellaceae</taxon>
        <taxon>Haemophilus</taxon>
    </lineage>
</organism>
<sequence length="619" mass="66965">MALLQIAEPGQAAAPHQHRLAVGIDLGTTNSLVASVRSGQSVILNDEQERSLVPSVVHYGVEEKKVGLEAFEQASLDPKNTVISVKRLIGRSLPDVQSRYSSLPYEFVASENGLPLIITAQGPKSPIEVSSDILLRLNHIAEQRLGGELSGVVITVPAYFDDAQRQSTKDAARLAGLNVLRLLNEPTAAALAYGLDSGQEGIIAVYDLGGGTFDISILRLSKGIFEVLATGGDTALGGDDFDHLIADWVIEQTKLKPQTANQQRELITLANQAKITLTNEKSAVISWQDFSVEISREQFNELIYPLVKRSLLTCRRALKDANVESEEVQAVVMVGGSTRVPYVREQVGEFFGKTPLTSIDPDKVVALGAAIQADILVGNKTDSDMLLLDVVPLSLGIETMGGLVEKIIPRNTTIPVARAQEFTTFKDGQTAMSVHVLQGERELVDDCRSLGRFTLRGIPPMAAGAAHIRVTYQVDADGLLSVTAMEKSTKVQASIQIKPSYGLTDEEVTAMIKSSFDNAQEDLQARELAEQRVEADRVIESVIVALQADGAELLSTDEFHHIETVLKQLMDVKQGSDRDAIAQGIKALDTATQEFAARRMNASINKALTGKNLSDIENP</sequence>
<gene>
    <name evidence="1" type="primary">hscA</name>
    <name type="ordered locus">CGSHiEE_01140</name>
</gene>
<proteinExistence type="inferred from homology"/>
<dbReference type="EMBL" id="CP000671">
    <property type="protein sequence ID" value="ABQ97714.1"/>
    <property type="molecule type" value="Genomic_DNA"/>
</dbReference>
<dbReference type="SMR" id="A5UAB3"/>
<dbReference type="KEGG" id="hip:CGSHiEE_01140"/>
<dbReference type="HOGENOM" id="CLU_005965_2_1_6"/>
<dbReference type="GO" id="GO:0005524">
    <property type="term" value="F:ATP binding"/>
    <property type="evidence" value="ECO:0007669"/>
    <property type="project" value="UniProtKB-KW"/>
</dbReference>
<dbReference type="GO" id="GO:0016887">
    <property type="term" value="F:ATP hydrolysis activity"/>
    <property type="evidence" value="ECO:0007669"/>
    <property type="project" value="UniProtKB-UniRule"/>
</dbReference>
<dbReference type="GO" id="GO:0140662">
    <property type="term" value="F:ATP-dependent protein folding chaperone"/>
    <property type="evidence" value="ECO:0007669"/>
    <property type="project" value="InterPro"/>
</dbReference>
<dbReference type="GO" id="GO:0051082">
    <property type="term" value="F:unfolded protein binding"/>
    <property type="evidence" value="ECO:0007669"/>
    <property type="project" value="InterPro"/>
</dbReference>
<dbReference type="GO" id="GO:0016226">
    <property type="term" value="P:iron-sulfur cluster assembly"/>
    <property type="evidence" value="ECO:0007669"/>
    <property type="project" value="InterPro"/>
</dbReference>
<dbReference type="CDD" id="cd10236">
    <property type="entry name" value="ASKHA_NBD_HSP70_HscA"/>
    <property type="match status" value="1"/>
</dbReference>
<dbReference type="FunFam" id="3.30.420.40:FF:000046">
    <property type="entry name" value="Chaperone protein HscA"/>
    <property type="match status" value="1"/>
</dbReference>
<dbReference type="FunFam" id="2.60.34.10:FF:000005">
    <property type="entry name" value="Chaperone protein HscA homolog"/>
    <property type="match status" value="1"/>
</dbReference>
<dbReference type="FunFam" id="3.30.420.40:FF:000020">
    <property type="entry name" value="Chaperone protein HscA homolog"/>
    <property type="match status" value="1"/>
</dbReference>
<dbReference type="Gene3D" id="1.20.1270.10">
    <property type="match status" value="1"/>
</dbReference>
<dbReference type="Gene3D" id="3.30.420.40">
    <property type="match status" value="2"/>
</dbReference>
<dbReference type="Gene3D" id="3.90.640.10">
    <property type="entry name" value="Actin, Chain A, domain 4"/>
    <property type="match status" value="1"/>
</dbReference>
<dbReference type="Gene3D" id="2.60.34.10">
    <property type="entry name" value="Substrate Binding Domain Of DNAk, Chain A, domain 1"/>
    <property type="match status" value="1"/>
</dbReference>
<dbReference type="HAMAP" id="MF_00679">
    <property type="entry name" value="HscA"/>
    <property type="match status" value="1"/>
</dbReference>
<dbReference type="InterPro" id="IPR043129">
    <property type="entry name" value="ATPase_NBD"/>
</dbReference>
<dbReference type="InterPro" id="IPR018181">
    <property type="entry name" value="Heat_shock_70_CS"/>
</dbReference>
<dbReference type="InterPro" id="IPR042039">
    <property type="entry name" value="HscA_NBD"/>
</dbReference>
<dbReference type="InterPro" id="IPR029048">
    <property type="entry name" value="HSP70_C_sf"/>
</dbReference>
<dbReference type="InterPro" id="IPR029047">
    <property type="entry name" value="HSP70_peptide-bd_sf"/>
</dbReference>
<dbReference type="InterPro" id="IPR013126">
    <property type="entry name" value="Hsp_70_fam"/>
</dbReference>
<dbReference type="InterPro" id="IPR010236">
    <property type="entry name" value="ISC_FeS_clus_asmbl_HscA"/>
</dbReference>
<dbReference type="NCBIfam" id="TIGR01991">
    <property type="entry name" value="HscA"/>
    <property type="match status" value="1"/>
</dbReference>
<dbReference type="NCBIfam" id="NF003520">
    <property type="entry name" value="PRK05183.1"/>
    <property type="match status" value="1"/>
</dbReference>
<dbReference type="PANTHER" id="PTHR19375">
    <property type="entry name" value="HEAT SHOCK PROTEIN 70KDA"/>
    <property type="match status" value="1"/>
</dbReference>
<dbReference type="Pfam" id="PF00012">
    <property type="entry name" value="HSP70"/>
    <property type="match status" value="1"/>
</dbReference>
<dbReference type="PRINTS" id="PR00301">
    <property type="entry name" value="HEATSHOCK70"/>
</dbReference>
<dbReference type="SUPFAM" id="SSF53067">
    <property type="entry name" value="Actin-like ATPase domain"/>
    <property type="match status" value="2"/>
</dbReference>
<dbReference type="SUPFAM" id="SSF100934">
    <property type="entry name" value="Heat shock protein 70kD (HSP70), C-terminal subdomain"/>
    <property type="match status" value="1"/>
</dbReference>
<dbReference type="SUPFAM" id="SSF100920">
    <property type="entry name" value="Heat shock protein 70kD (HSP70), peptide-binding domain"/>
    <property type="match status" value="1"/>
</dbReference>
<dbReference type="PROSITE" id="PS00297">
    <property type="entry name" value="HSP70_1"/>
    <property type="match status" value="1"/>
</dbReference>
<dbReference type="PROSITE" id="PS00329">
    <property type="entry name" value="HSP70_2"/>
    <property type="match status" value="1"/>
</dbReference>
<dbReference type="PROSITE" id="PS01036">
    <property type="entry name" value="HSP70_3"/>
    <property type="match status" value="1"/>
</dbReference>
<comment type="function">
    <text evidence="1">Chaperone involved in the maturation of iron-sulfur cluster-containing proteins. Has a low intrinsic ATPase activity which is markedly stimulated by HscB.</text>
</comment>
<comment type="similarity">
    <text evidence="1">Belongs to the heat shock protein 70 family.</text>
</comment>
<evidence type="ECO:0000255" key="1">
    <source>
        <dbReference type="HAMAP-Rule" id="MF_00679"/>
    </source>
</evidence>
<reference key="1">
    <citation type="journal article" date="2007" name="Genome Biol.">
        <title>Characterization and modeling of the Haemophilus influenzae core and supragenomes based on the complete genomic sequences of Rd and 12 clinical nontypeable strains.</title>
        <authorList>
            <person name="Hogg J.S."/>
            <person name="Hu F.Z."/>
            <person name="Janto B."/>
            <person name="Boissy R."/>
            <person name="Hayes J."/>
            <person name="Keefe R."/>
            <person name="Post J.C."/>
            <person name="Ehrlich G.D."/>
        </authorList>
    </citation>
    <scope>NUCLEOTIDE SEQUENCE [LARGE SCALE GENOMIC DNA]</scope>
    <source>
        <strain>PittEE</strain>
    </source>
</reference>
<feature type="chain" id="PRO_1000044859" description="Chaperone protein HscA homolog">
    <location>
        <begin position="1"/>
        <end position="619"/>
    </location>
</feature>
<accession>A5UAB3</accession>